<gene>
    <name evidence="6" type="primary">waaP</name>
    <name evidence="7" type="synonym">rfaP</name>
    <name type="ordered locus">PA5009</name>
</gene>
<protein>
    <recommendedName>
        <fullName evidence="9">Lipopolysaccharide core heptose(I) kinase WaaP</fullName>
        <ecNumber evidence="3">2.7.1.235</ecNumber>
    </recommendedName>
    <alternativeName>
        <fullName evidence="6">Eukaryotic-type protein tyrosine kinase WaaP</fullName>
        <ecNumber evidence="3">2.7.10.2</ecNumber>
    </alternativeName>
    <alternativeName>
        <fullName evidence="8">Lipopolysaccharide heptose kinase WaaP</fullName>
        <shortName evidence="8">LPS heptose kinase WaaP</shortName>
    </alternativeName>
</protein>
<keyword id="KW-0002">3D-structure</keyword>
<keyword id="KW-0067">ATP-binding</keyword>
<keyword id="KW-0963">Cytoplasm</keyword>
<keyword id="KW-0903">Direct protein sequencing</keyword>
<keyword id="KW-0418">Kinase</keyword>
<keyword id="KW-0448">Lipopolysaccharide biosynthesis</keyword>
<keyword id="KW-0460">Magnesium</keyword>
<keyword id="KW-0547">Nucleotide-binding</keyword>
<keyword id="KW-0597">Phosphoprotein</keyword>
<keyword id="KW-1185">Reference proteome</keyword>
<keyword id="KW-0808">Transferase</keyword>
<keyword id="KW-0829">Tyrosine-protein kinase</keyword>
<dbReference type="EC" id="2.7.1.235" evidence="3"/>
<dbReference type="EC" id="2.7.10.2" evidence="3"/>
<dbReference type="EMBL" id="AF087652">
    <property type="protein sequence ID" value="AAD12056.1"/>
    <property type="molecule type" value="Genomic_DNA"/>
</dbReference>
<dbReference type="EMBL" id="AE004091">
    <property type="protein sequence ID" value="AAG08394.1"/>
    <property type="molecule type" value="Genomic_DNA"/>
</dbReference>
<dbReference type="PIR" id="E83020">
    <property type="entry name" value="E83020"/>
</dbReference>
<dbReference type="RefSeq" id="NP_253696.1">
    <property type="nucleotide sequence ID" value="NC_002516.2"/>
</dbReference>
<dbReference type="RefSeq" id="WP_003114553.1">
    <property type="nucleotide sequence ID" value="NZ_QZGE01000002.1"/>
</dbReference>
<dbReference type="PDB" id="6DFL">
    <property type="method" value="X-ray"/>
    <property type="resolution" value="2.40 A"/>
    <property type="chains" value="A=1-259"/>
</dbReference>
<dbReference type="PDBsum" id="6DFL"/>
<dbReference type="SMR" id="Q9HUF7"/>
<dbReference type="FunCoup" id="Q9HUF7">
    <property type="interactions" value="50"/>
</dbReference>
<dbReference type="STRING" id="208964.PA5009"/>
<dbReference type="iPTMnet" id="Q9HUF7"/>
<dbReference type="PaxDb" id="208964-PA5009"/>
<dbReference type="DNASU" id="881540"/>
<dbReference type="GeneID" id="881540"/>
<dbReference type="KEGG" id="pae:PA5009"/>
<dbReference type="PATRIC" id="fig|208964.12.peg.5249"/>
<dbReference type="PseudoCAP" id="PA5009"/>
<dbReference type="HOGENOM" id="CLU_081267_0_0_6"/>
<dbReference type="InParanoid" id="Q9HUF7"/>
<dbReference type="OrthoDB" id="9782725at2"/>
<dbReference type="PhylomeDB" id="Q9HUF7"/>
<dbReference type="BioCyc" id="PAER208964:G1FZ6-5125-MONOMER"/>
<dbReference type="UniPathway" id="UPA00958"/>
<dbReference type="Proteomes" id="UP000002438">
    <property type="component" value="Chromosome"/>
</dbReference>
<dbReference type="GO" id="GO:0005737">
    <property type="term" value="C:cytoplasm"/>
    <property type="evidence" value="ECO:0007669"/>
    <property type="project" value="UniProtKB-SubCell"/>
</dbReference>
<dbReference type="GO" id="GO:0005524">
    <property type="term" value="F:ATP binding"/>
    <property type="evidence" value="ECO:0007669"/>
    <property type="project" value="UniProtKB-KW"/>
</dbReference>
<dbReference type="GO" id="GO:0016301">
    <property type="term" value="F:kinase activity"/>
    <property type="evidence" value="ECO:0000314"/>
    <property type="project" value="PseudoCAP"/>
</dbReference>
<dbReference type="GO" id="GO:0004715">
    <property type="term" value="F:non-membrane spanning protein tyrosine kinase activity"/>
    <property type="evidence" value="ECO:0007669"/>
    <property type="project" value="UniProtKB-EC"/>
</dbReference>
<dbReference type="GO" id="GO:0009244">
    <property type="term" value="P:lipopolysaccharide core region biosynthetic process"/>
    <property type="evidence" value="ECO:0000314"/>
    <property type="project" value="PseudoCAP"/>
</dbReference>
<dbReference type="InterPro" id="IPR011009">
    <property type="entry name" value="Kinase-like_dom_sf"/>
</dbReference>
<dbReference type="InterPro" id="IPR017172">
    <property type="entry name" value="Lsacc_core_hep_kinase_RfaP"/>
</dbReference>
<dbReference type="NCBIfam" id="NF011703">
    <property type="entry name" value="PRK15123.1"/>
    <property type="match status" value="1"/>
</dbReference>
<dbReference type="Pfam" id="PF06293">
    <property type="entry name" value="Kdo"/>
    <property type="match status" value="1"/>
</dbReference>
<dbReference type="PIRSF" id="PIRSF037318">
    <property type="entry name" value="RfaP"/>
    <property type="match status" value="1"/>
</dbReference>
<dbReference type="SUPFAM" id="SSF56112">
    <property type="entry name" value="Protein kinase-like (PK-like)"/>
    <property type="match status" value="1"/>
</dbReference>
<proteinExistence type="evidence at protein level"/>
<sequence>MRLVLEEPFKRLWNGRDPFEAVEALQGKVYRELEGRRTLRTEVDGRGYFVKIHRGIGWGEIAKNLLTAKLPVLGARQEWQAIRRLHEAGVATMTAVAYGERGSDPARQHSFIVTEELAPTVDLEVFSQDWRERPPPPRLKRALVEAVARMVGDMHRAGVNHRDCYICHFLLHTDKPVSADDFRLSVIDLHRAQTRDATPKRWRNKDLAALYFSALDIGLTRRDKLRFLRTYFRRPLREILRDEAGLLAWMERKAEKLYERKQRYGDLL</sequence>
<accession>Q9HUF7</accession>
<accession>Q9R883</accession>
<organism>
    <name type="scientific">Pseudomonas aeruginosa (strain ATCC 15692 / DSM 22644 / CIP 104116 / JCM 14847 / LMG 12228 / 1C / PRS 101 / PAO1)</name>
    <dbReference type="NCBI Taxonomy" id="208964"/>
    <lineage>
        <taxon>Bacteria</taxon>
        <taxon>Pseudomonadati</taxon>
        <taxon>Pseudomonadota</taxon>
        <taxon>Gammaproteobacteria</taxon>
        <taxon>Pseudomonadales</taxon>
        <taxon>Pseudomonadaceae</taxon>
        <taxon>Pseudomonas</taxon>
    </lineage>
</organism>
<reference key="1">
    <citation type="journal article" date="2002" name="J. Biol. Chem.">
        <title>WaaP of Pseudomonas aeruginosa is a novel eukaryotic type protein-tyrosine kinase as well as a sugar kinase essential for the biosynthesis of core lipopolysaccharide.</title>
        <authorList>
            <person name="Zhao X."/>
            <person name="Lam J.S."/>
        </authorList>
    </citation>
    <scope>NUCLEOTIDE SEQUENCE [GENOMIC DNA]</scope>
    <scope>PROTEIN SEQUENCE OF 12-36; 38-54; 84-101; 151-171; 211-237 AND 257-268</scope>
    <scope>FUNCTION</scope>
    <scope>CATALYTIC ACTIVITY</scope>
    <scope>BIOPHYSICOCHEMICAL PROPERTIES</scope>
    <scope>PATHWAY</scope>
    <scope>SUBCELLULAR LOCATION</scope>
    <scope>MASS SPECTROMETRY</scope>
    <scope>DOMAIN</scope>
    <scope>DISRUPTION PHENOTYPE</scope>
    <scope>PHOSPHORYLATION AT TYR-30; TYR-48; TYR-98; TYR-165; TYR-211; TYR-231; TYR-258 AND TYR-264</scope>
    <scope>MUTAGENESIS OF LYS-69 AND ASP-163</scope>
    <source>
        <strain>ATCC 15692 / DSM 22644 / CIP 104116 / JCM 14847 / LMG 12228 / 1C / PRS 101 / PAO1</strain>
    </source>
</reference>
<reference key="2">
    <citation type="journal article" date="2000" name="Nature">
        <title>Complete genome sequence of Pseudomonas aeruginosa PAO1, an opportunistic pathogen.</title>
        <authorList>
            <person name="Stover C.K."/>
            <person name="Pham X.-Q.T."/>
            <person name="Erwin A.L."/>
            <person name="Mizoguchi S.D."/>
            <person name="Warrener P."/>
            <person name="Hickey M.J."/>
            <person name="Brinkman F.S.L."/>
            <person name="Hufnagle W.O."/>
            <person name="Kowalik D.J."/>
            <person name="Lagrou M."/>
            <person name="Garber R.L."/>
            <person name="Goltry L."/>
            <person name="Tolentino E."/>
            <person name="Westbrock-Wadman S."/>
            <person name="Yuan Y."/>
            <person name="Brody L.L."/>
            <person name="Coulter S.N."/>
            <person name="Folger K.R."/>
            <person name="Kas A."/>
            <person name="Larbig K."/>
            <person name="Lim R.M."/>
            <person name="Smith K.A."/>
            <person name="Spencer D.H."/>
            <person name="Wong G.K.-S."/>
            <person name="Wu Z."/>
            <person name="Paulsen I.T."/>
            <person name="Reizer J."/>
            <person name="Saier M.H. Jr."/>
            <person name="Hancock R.E.W."/>
            <person name="Lory S."/>
            <person name="Olson M.V."/>
        </authorList>
    </citation>
    <scope>NUCLEOTIDE SEQUENCE [LARGE SCALE GENOMIC DNA]</scope>
    <source>
        <strain>ATCC 15692 / DSM 22644 / CIP 104116 / JCM 14847 / LMG 12228 / 1C / PRS 101 / PAO1</strain>
    </source>
</reference>
<reference key="3">
    <citation type="journal article" date="2011" name="MBio">
        <title>Lipopolysaccharide (LPS) inner-core phosphates are required for complete LPS synthesis and transport to the outer membrane in Pseudomonas aeruginosa PAO1.</title>
        <authorList>
            <person name="Delucia A.M."/>
            <person name="Six D.A."/>
            <person name="Caughlan R.E."/>
            <person name="Gee P."/>
            <person name="Hunt I."/>
            <person name="Lam J.S."/>
            <person name="Dean C.R."/>
        </authorList>
    </citation>
    <scope>FUNCTION</scope>
    <scope>PATHWAY</scope>
    <scope>DISRUPTION PHENOTYPE</scope>
    <source>
        <strain>ATCC 15692 / DSM 22644 / CIP 104116 / JCM 14847 / LMG 12228 / 1C / PRS 101 / PAO1</strain>
    </source>
</reference>
<reference evidence="10" key="4">
    <citation type="journal article" date="2018" name="Sci. Rep.">
        <title>Acylated-acyl carrier protein stabilizes the Pseudomonas aeruginosa WaaP lipopolysaccharide heptose kinase.</title>
        <authorList>
            <person name="Kreamer N.N.K."/>
            <person name="Chopra R."/>
            <person name="Caughlan R.E."/>
            <person name="Fabbro D."/>
            <person name="Fang E."/>
            <person name="Gee P."/>
            <person name="Hunt I."/>
            <person name="Li M."/>
            <person name="Leon B.C."/>
            <person name="Muller L."/>
            <person name="Vash B."/>
            <person name="Woods A.L."/>
            <person name="Stams T."/>
            <person name="Dean C.R."/>
            <person name="Uehara T."/>
        </authorList>
    </citation>
    <scope>X-RAY CRYSTALLOGRAPHY (2.40 ANGSTROMS) OF 1-259 IN COMPLEX WITH E.COLI ACYL-ACP</scope>
    <scope>FUNCTION</scope>
    <scope>ACTIVITY REGULATION</scope>
    <scope>INTERACTION WITH ACYL-ACPP</scope>
    <scope>DOMAIN</scope>
    <scope>DISRUPTION PHENOTYPE</scope>
    <scope>MUTAGENESIS OF LYS-51; VAL-147; HIS-161; ASP-163; TYR-165; HIS-168; ASP-188 AND ARG-191</scope>
    <source>
        <strain>ATCC 15692 / DSM 22644 / CIP 104116 / JCM 14847 / LMG 12228 / 1C / PRS 101 / PAO1</strain>
    </source>
</reference>
<name>WAAP_PSEAE</name>
<feature type="chain" id="PRO_0000395801" description="Lipopolysaccharide core heptose(I) kinase WaaP">
    <location>
        <begin position="1"/>
        <end position="268"/>
    </location>
</feature>
<feature type="active site" evidence="1">
    <location>
        <position position="163"/>
    </location>
</feature>
<feature type="modified residue" description="Phosphotyrosine; by autocatalysis" evidence="3">
    <location>
        <position position="30"/>
    </location>
</feature>
<feature type="modified residue" description="Phosphotyrosine; by autocatalysis" evidence="3">
    <location>
        <position position="48"/>
    </location>
</feature>
<feature type="modified residue" description="Phosphotyrosine; by autocatalysis" evidence="3">
    <location>
        <position position="98"/>
    </location>
</feature>
<feature type="modified residue" description="Phosphotyrosine; by autocatalysis" evidence="3">
    <location>
        <position position="165"/>
    </location>
</feature>
<feature type="modified residue" description="Phosphotyrosine; by autocatalysis" evidence="3">
    <location>
        <position position="211"/>
    </location>
</feature>
<feature type="modified residue" description="Phosphotyrosine; by autocatalysis" evidence="3">
    <location>
        <position position="231"/>
    </location>
</feature>
<feature type="modified residue" description="Phosphotyrosine; by autocatalysis" evidence="3">
    <location>
        <position position="258"/>
    </location>
</feature>
<feature type="modified residue" description="Phosphotyrosine; by autocatalysis" evidence="3">
    <location>
        <position position="264"/>
    </location>
</feature>
<feature type="mutagenesis site" description="Loss of activity, cannot complement a deletion mutant." evidence="5">
    <original>K</original>
    <variation>A</variation>
    <location>
        <position position="51"/>
    </location>
</feature>
<feature type="mutagenesis site" description="Loss of protein-tyrosine kinase activity." evidence="3">
    <original>K</original>
    <variation>A</variation>
    <variation>R</variation>
    <location>
        <position position="69"/>
    </location>
</feature>
<feature type="mutagenesis site" description="Loss of activity, cannot complement a deletion mutant." evidence="5">
    <original>V</original>
    <variation>W</variation>
    <location>
        <position position="147"/>
    </location>
</feature>
<feature type="mutagenesis site" description="Loss of activity, cannot complement a deletion mutant." evidence="5">
    <original>H</original>
    <variation>A</variation>
    <location>
        <position position="161"/>
    </location>
</feature>
<feature type="mutagenesis site" description="Loss of activity, cannot complement a deletion mutant. Loss of protein-tyrosine kinase activity." evidence="3 5">
    <original>D</original>
    <variation>A</variation>
    <location>
        <position position="163"/>
    </location>
</feature>
<feature type="mutagenesis site" description="Loss of protein-tyrosine kinase activity." evidence="3">
    <original>D</original>
    <variation>E</variation>
    <location>
        <position position="163"/>
    </location>
</feature>
<feature type="mutagenesis site" description="Loss of activity, cannot complement a deletion mutant." evidence="5">
    <original>Y</original>
    <variation>A</variation>
    <location>
        <position position="165"/>
    </location>
</feature>
<feature type="mutagenesis site" description="Loss of activity, cannot complement a deletion mutant." evidence="5">
    <original>H</original>
    <variation>A</variation>
    <location>
        <position position="168"/>
    </location>
</feature>
<feature type="mutagenesis site" description="Loss of activity, cannot complement a deletion mutant." evidence="5">
    <original>D</original>
    <variation>N</variation>
    <location>
        <position position="188"/>
    </location>
</feature>
<feature type="mutagenesis site" description="Loss of activity, cannot complement a deletion mutant." evidence="5">
    <original>R</original>
    <variation>A</variation>
    <location>
        <position position="191"/>
    </location>
</feature>
<feature type="sequence conflict" description="In Ref. 1; AAD12056." evidence="9" ref="1">
    <original>K</original>
    <variation>Q</variation>
    <location>
        <position position="253"/>
    </location>
</feature>
<feature type="strand" evidence="11">
    <location>
        <begin position="2"/>
        <end position="5"/>
    </location>
</feature>
<feature type="helix" evidence="11">
    <location>
        <begin position="9"/>
        <end position="12"/>
    </location>
</feature>
<feature type="turn" evidence="11">
    <location>
        <begin position="13"/>
        <end position="15"/>
    </location>
</feature>
<feature type="helix" evidence="11">
    <location>
        <begin position="18"/>
        <end position="24"/>
    </location>
</feature>
<feature type="strand" evidence="11">
    <location>
        <begin position="27"/>
        <end position="29"/>
    </location>
</feature>
<feature type="strand" evidence="11">
    <location>
        <begin position="37"/>
        <end position="41"/>
    </location>
</feature>
<feature type="strand" evidence="11">
    <location>
        <begin position="48"/>
        <end position="53"/>
    </location>
</feature>
<feature type="helix" evidence="11">
    <location>
        <begin position="76"/>
        <end position="87"/>
    </location>
</feature>
<feature type="strand" evidence="11">
    <location>
        <begin position="95"/>
        <end position="101"/>
    </location>
</feature>
<feature type="strand" evidence="11">
    <location>
        <begin position="103"/>
        <end position="107"/>
    </location>
</feature>
<feature type="strand" evidence="11">
    <location>
        <begin position="109"/>
        <end position="115"/>
    </location>
</feature>
<feature type="strand" evidence="11">
    <location>
        <begin position="119"/>
        <end position="122"/>
    </location>
</feature>
<feature type="helix" evidence="11">
    <location>
        <begin position="123"/>
        <end position="127"/>
    </location>
</feature>
<feature type="turn" evidence="11">
    <location>
        <begin position="128"/>
        <end position="132"/>
    </location>
</feature>
<feature type="helix" evidence="11">
    <location>
        <begin position="137"/>
        <end position="156"/>
    </location>
</feature>
<feature type="helix" evidence="11">
    <location>
        <begin position="166"/>
        <end position="168"/>
    </location>
</feature>
<feature type="strand" evidence="11">
    <location>
        <begin position="169"/>
        <end position="172"/>
    </location>
</feature>
<feature type="strand" evidence="11">
    <location>
        <begin position="184"/>
        <end position="186"/>
    </location>
</feature>
<feature type="helix" evidence="11">
    <location>
        <begin position="200"/>
        <end position="212"/>
    </location>
</feature>
<feature type="turn" evidence="11">
    <location>
        <begin position="213"/>
        <end position="216"/>
    </location>
</feature>
<feature type="helix" evidence="11">
    <location>
        <begin position="221"/>
        <end position="232"/>
    </location>
</feature>
<feature type="helix" evidence="11">
    <location>
        <begin position="236"/>
        <end position="242"/>
    </location>
</feature>
<feature type="helix" evidence="11">
    <location>
        <begin position="244"/>
        <end position="257"/>
    </location>
</feature>
<comment type="function">
    <text evidence="3 4 5">Kinase involved in the biosynthesis of the core oligosaccharide region of lipopolysaccharide (LPS) (PubMed:11741974, PubMed:21810964, PubMed:30237436). Catalyzes the phosphorylation of heptose I (HepI), the first heptose added to the Kdo2-lipid A module (PubMed:11741974). Also has protein-tyrosine kinase activity: autophosphorylates on all Tyr residues; in vitro can phosphorylate poly(Glu,Tyr) (PubMed:11741974).</text>
</comment>
<comment type="catalytic activity">
    <reaction evidence="3">
        <text>an L-alpha-D-Hep-(1-&gt;3)-L-alpha-D-Hep-(1-&gt;5)-[alpha-Kdo-(2-&gt;4)]-alpha-Kdo-(2-&gt;6)-lipid A + ATP = an L-alpha-D-Hep-(1-&gt;3)-4-O-phospho-L-alpha-D-Hep-(1-&gt;5)-[alpha-Kdo-(2-&gt;4)]-alpha-Kdo-(2-&gt;6)-lipid A + ADP + H(+)</text>
        <dbReference type="Rhea" id="RHEA:74087"/>
        <dbReference type="ChEBI" id="CHEBI:15378"/>
        <dbReference type="ChEBI" id="CHEBI:30616"/>
        <dbReference type="ChEBI" id="CHEBI:193069"/>
        <dbReference type="ChEBI" id="CHEBI:193070"/>
        <dbReference type="ChEBI" id="CHEBI:456216"/>
        <dbReference type="EC" id="2.7.1.235"/>
    </reaction>
</comment>
<comment type="catalytic activity">
    <reaction evidence="3">
        <text>L-tyrosyl-[protein] + ATP = O-phospho-L-tyrosyl-[protein] + ADP + H(+)</text>
        <dbReference type="Rhea" id="RHEA:10596"/>
        <dbReference type="Rhea" id="RHEA-COMP:10136"/>
        <dbReference type="Rhea" id="RHEA-COMP:20101"/>
        <dbReference type="ChEBI" id="CHEBI:15378"/>
        <dbReference type="ChEBI" id="CHEBI:30616"/>
        <dbReference type="ChEBI" id="CHEBI:46858"/>
        <dbReference type="ChEBI" id="CHEBI:61978"/>
        <dbReference type="ChEBI" id="CHEBI:456216"/>
        <dbReference type="EC" id="2.7.10.2"/>
    </reaction>
</comment>
<comment type="cofactor">
    <cofactor evidence="2">
        <name>Mg(2+)</name>
        <dbReference type="ChEBI" id="CHEBI:18420"/>
    </cofactor>
</comment>
<comment type="activity regulation">
    <text evidence="5">Acylated-acyl carrier protein (acyl-ACP) acts as a very tightly bound cofactor necessary for the production and stability of active WaaP kinase.</text>
</comment>
<comment type="biophysicochemical properties">
    <kinetics>
        <KM evidence="3">0.22 mM for ATP</KM>
        <KM evidence="3">14.4 uM for hydrofluoric acid-treated lipopolysaccharide</KM>
        <text evidence="3">kcat is 27.23 min(-1) for lipopolysaccharide kinase activity.</text>
    </kinetics>
</comment>
<comment type="pathway">
    <text evidence="3 4">Bacterial outer membrane biogenesis; LPS core biosynthesis.</text>
</comment>
<comment type="subunit">
    <text evidence="5">Interacts with acyl-AcpP (PubMed:30237436). The WaaP hydrophobic channel can accommodate acyl chains of different lengths, but myristyl-ACP is likely its physiological binding partner (PubMed:30237436).</text>
</comment>
<comment type="subcellular location">
    <subcellularLocation>
        <location evidence="3">Cytoplasm</location>
    </subcellularLocation>
</comment>
<comment type="domain">
    <text evidence="3 5">Shares similarity with eukaryotic protein kinases in the conserved tyrosine kinase functional motifs.</text>
</comment>
<comment type="mass spectrometry">
    <text>Phosphorylated protein.</text>
</comment>
<comment type="disruption phenotype">
    <text evidence="3 4 5">Lack of viability (PubMed:11741974). WaaP depletion causes gross changes in cell morphology and leads to the accumulation of an aberrant LPS lacking several core sugars and all core phosphates (PubMed:21810964). The aberrant LPS fails to reach the outer membrane (PubMed:21810964). Down-regulation of native WaaP expression also increases the cells susceptibility to EDTA (PubMed:30237436).</text>
</comment>
<comment type="similarity">
    <text evidence="9">Belongs to the protein kinase superfamily. KdkA/RfaP family.</text>
</comment>
<evidence type="ECO:0000250" key="1">
    <source>
        <dbReference type="UniProtKB" id="Q9BRS2"/>
    </source>
</evidence>
<evidence type="ECO:0000250" key="2">
    <source>
        <dbReference type="UniProtKB" id="Q9R9D6"/>
    </source>
</evidence>
<evidence type="ECO:0000269" key="3">
    <source>
    </source>
</evidence>
<evidence type="ECO:0000269" key="4">
    <source>
    </source>
</evidence>
<evidence type="ECO:0000269" key="5">
    <source>
    </source>
</evidence>
<evidence type="ECO:0000303" key="6">
    <source>
    </source>
</evidence>
<evidence type="ECO:0000303" key="7">
    <source>
    </source>
</evidence>
<evidence type="ECO:0000303" key="8">
    <source>
    </source>
</evidence>
<evidence type="ECO:0000305" key="9"/>
<evidence type="ECO:0007744" key="10">
    <source>
        <dbReference type="PDB" id="6DFL"/>
    </source>
</evidence>
<evidence type="ECO:0007829" key="11">
    <source>
        <dbReference type="PDB" id="6DFL"/>
    </source>
</evidence>